<organism>
    <name type="scientific">Caenorhabditis elegans</name>
    <dbReference type="NCBI Taxonomy" id="6239"/>
    <lineage>
        <taxon>Eukaryota</taxon>
        <taxon>Metazoa</taxon>
        <taxon>Ecdysozoa</taxon>
        <taxon>Nematoda</taxon>
        <taxon>Chromadorea</taxon>
        <taxon>Rhabditida</taxon>
        <taxon>Rhabditina</taxon>
        <taxon>Rhabditomorpha</taxon>
        <taxon>Rhabditoidea</taxon>
        <taxon>Rhabditidae</taxon>
        <taxon>Peloderinae</taxon>
        <taxon>Caenorhabditis</taxon>
    </lineage>
</organism>
<evidence type="ECO:0000269" key="1">
    <source>
    </source>
</evidence>
<evidence type="ECO:0000269" key="2">
    <source>
    </source>
</evidence>
<evidence type="ECO:0000269" key="3">
    <source>
    </source>
</evidence>
<evidence type="ECO:0000305" key="4"/>
<protein>
    <recommendedName>
        <fullName>MO25-like protein 2</fullName>
    </recommendedName>
</protein>
<dbReference type="EMBL" id="Z99277">
    <property type="protein sequence ID" value="CAB16486.1"/>
    <property type="molecule type" value="Genomic_DNA"/>
</dbReference>
<dbReference type="PIR" id="T27129">
    <property type="entry name" value="T27129"/>
</dbReference>
<dbReference type="RefSeq" id="NP_496092.1">
    <property type="nucleotide sequence ID" value="NM_063691.6"/>
</dbReference>
<dbReference type="SMR" id="O18211"/>
<dbReference type="BioGRID" id="39850">
    <property type="interactions" value="4"/>
</dbReference>
<dbReference type="FunCoup" id="O18211">
    <property type="interactions" value="3007"/>
</dbReference>
<dbReference type="STRING" id="6239.Y53C12A.4.2"/>
<dbReference type="PaxDb" id="6239-Y53C12A.4.1"/>
<dbReference type="PeptideAtlas" id="O18211"/>
<dbReference type="EnsemblMetazoa" id="Y53C12A.4.1">
    <property type="protein sequence ID" value="Y53C12A.4.1"/>
    <property type="gene ID" value="WBGene00013140"/>
</dbReference>
<dbReference type="GeneID" id="174527"/>
<dbReference type="KEGG" id="cel:CELE_Y53C12A.4"/>
<dbReference type="AGR" id="WB:WBGene00013140"/>
<dbReference type="CTD" id="174527"/>
<dbReference type="WormBase" id="Y53C12A.4">
    <property type="protein sequence ID" value="CE14890"/>
    <property type="gene ID" value="WBGene00013140"/>
    <property type="gene designation" value="mop-25.2"/>
</dbReference>
<dbReference type="eggNOG" id="KOG1566">
    <property type="taxonomic scope" value="Eukaryota"/>
</dbReference>
<dbReference type="GeneTree" id="ENSGT00390000004360"/>
<dbReference type="HOGENOM" id="CLU_035755_0_0_1"/>
<dbReference type="InParanoid" id="O18211"/>
<dbReference type="OMA" id="HYNEFTR"/>
<dbReference type="OrthoDB" id="609103at2759"/>
<dbReference type="PhylomeDB" id="O18211"/>
<dbReference type="Reactome" id="R-CEL-6798695">
    <property type="pathway name" value="Neutrophil degranulation"/>
</dbReference>
<dbReference type="PRO" id="PR:O18211"/>
<dbReference type="Proteomes" id="UP000001940">
    <property type="component" value="Chromosome II"/>
</dbReference>
<dbReference type="Bgee" id="WBGene00013140">
    <property type="expression patterns" value="Expressed in germ line (C elegans) and 4 other cell types or tissues"/>
</dbReference>
<dbReference type="GO" id="GO:0005737">
    <property type="term" value="C:cytoplasm"/>
    <property type="evidence" value="ECO:0007669"/>
    <property type="project" value="UniProtKB-KW"/>
</dbReference>
<dbReference type="GO" id="GO:0000922">
    <property type="term" value="C:spindle pole"/>
    <property type="evidence" value="ECO:0007669"/>
    <property type="project" value="UniProtKB-SubCell"/>
</dbReference>
<dbReference type="GO" id="GO:0043539">
    <property type="term" value="F:protein serine/threonine kinase activator activity"/>
    <property type="evidence" value="ECO:0000318"/>
    <property type="project" value="GO_Central"/>
</dbReference>
<dbReference type="GO" id="GO:0055059">
    <property type="term" value="P:asymmetric neuroblast division"/>
    <property type="evidence" value="ECO:0000315"/>
    <property type="project" value="WormBase"/>
</dbReference>
<dbReference type="GO" id="GO:0035556">
    <property type="term" value="P:intracellular signal transduction"/>
    <property type="evidence" value="ECO:0000318"/>
    <property type="project" value="GO_Central"/>
</dbReference>
<dbReference type="FunFam" id="1.25.10.10:FF:000025">
    <property type="entry name" value="Calcium-binding protein 39"/>
    <property type="match status" value="1"/>
</dbReference>
<dbReference type="Gene3D" id="1.25.10.10">
    <property type="entry name" value="Leucine-rich Repeat Variant"/>
    <property type="match status" value="1"/>
</dbReference>
<dbReference type="InterPro" id="IPR011989">
    <property type="entry name" value="ARM-like"/>
</dbReference>
<dbReference type="InterPro" id="IPR016024">
    <property type="entry name" value="ARM-type_fold"/>
</dbReference>
<dbReference type="InterPro" id="IPR013878">
    <property type="entry name" value="Mo25"/>
</dbReference>
<dbReference type="PANTHER" id="PTHR10182">
    <property type="entry name" value="CALCIUM-BINDING PROTEIN 39-RELATED"/>
    <property type="match status" value="1"/>
</dbReference>
<dbReference type="PANTHER" id="PTHR10182:SF13">
    <property type="entry name" value="MO25-LIKE PROTEIN 2"/>
    <property type="match status" value="1"/>
</dbReference>
<dbReference type="Pfam" id="PF08569">
    <property type="entry name" value="Mo25"/>
    <property type="match status" value="1"/>
</dbReference>
<dbReference type="SUPFAM" id="SSF48371">
    <property type="entry name" value="ARM repeat"/>
    <property type="match status" value="1"/>
</dbReference>
<gene>
    <name type="primary">mop-25.2</name>
    <name type="ORF">Y53C12A.4</name>
</gene>
<name>MO25M_CAEEL</name>
<accession>O18211</accession>
<feature type="chain" id="PRO_0000209830" description="MO25-like protein 2">
    <location>
        <begin position="1"/>
        <end position="338"/>
    </location>
</feature>
<proteinExistence type="inferred from homology"/>
<reference key="1">
    <citation type="journal article" date="1998" name="Science">
        <title>Genome sequence of the nematode C. elegans: a platform for investigating biology.</title>
        <authorList>
            <consortium name="The C. elegans sequencing consortium"/>
        </authorList>
    </citation>
    <scope>NUCLEOTIDE SEQUENCE [LARGE SCALE GENOMIC DNA]</scope>
    <source>
        <strain>Bristol N2</strain>
    </source>
</reference>
<reference key="2">
    <citation type="journal article" date="2007" name="PLoS Genet.">
        <title>Dynein modifiers in C. elegans: light chains suppress conditional heavy chain mutants.</title>
        <authorList>
            <person name="O'Rourke S.M."/>
            <person name="Dorfman M.D."/>
            <person name="Carter J.C."/>
            <person name="Bowerman B."/>
        </authorList>
    </citation>
    <scope>SUBCELLULAR LOCATION</scope>
</reference>
<reference key="3">
    <citation type="journal article" date="2012" name="Nature">
        <title>Programmed elimination of cells by caspase-independent cell extrusion in C. elegans.</title>
        <authorList>
            <person name="Denning D.P."/>
            <person name="Hatch V."/>
            <person name="Horvitz H.R."/>
        </authorList>
    </citation>
    <scope>FUNCTION</scope>
</reference>
<reference evidence="4" key="4">
    <citation type="journal article" date="2013" name="Genetics">
        <title>Caenorhabditis elegans PIG-1/MELK acts in a conserved PAR-4/LKB1 polarity pathway to promote asymmetric neuroblast divisions.</title>
        <authorList>
            <person name="Chien S.C."/>
            <person name="Brinkmann E.M."/>
            <person name="Teuliere J."/>
            <person name="Garriga G."/>
        </authorList>
    </citation>
    <scope>FUNCTION</scope>
    <scope>DISRUPTION PHENOTYPE</scope>
</reference>
<keyword id="KW-0963">Cytoplasm</keyword>
<keyword id="KW-0206">Cytoskeleton</keyword>
<keyword id="KW-1185">Reference proteome</keyword>
<sequence length="338" mass="39431">MLKPLFGKADKTPADVVKNLRDALLVIDRHGTNTSERKVEKAIEETAKMLALAKTFIYGSDANEPNNEQVTQLAQEVYNANVLPMLIKHLHKFEFECKKDVASVFNNLLRRQIGTRSPTVEYLAARPEILITLLLGYEQPDIALTCGSMLREAVRHEHLARIVLYSEYFQRFFVFVQSDVFDIATDAFSTFKDLMTKHKNMCAEYLDNNYDRFFGQYSALTNSENYVTRRQSLKLLGELLLDRHNFSTMNKYITSPENLKTVMELLRDKRRNIQYEAFHVFKIFVANPNKPRPITDILTRNRDKLVEFLTAFHNDRTNDEQFNDEKAYLIKQIQELRV</sequence>
<comment type="function">
    <text evidence="2 3">Regulates asymmetric cell division in Q.p neuroblast lineage (PubMed:23267054). Plays a role in cell shedding during embryogenesis (PubMed:22801495).</text>
</comment>
<comment type="subcellular location">
    <subcellularLocation>
        <location evidence="1">Cytoplasm</location>
        <location evidence="1">Cytoskeleton</location>
        <location evidence="1">Spindle pole</location>
    </subcellularLocation>
</comment>
<comment type="disruption phenotype">
    <text evidence="3">RNAi-mediated knockdown results in the production of additional AVM/PVM neuronal precursors.</text>
</comment>
<comment type="similarity">
    <text evidence="4">Belongs to the Mo25 family.</text>
</comment>